<dbReference type="EC" id="4.1.1.39" evidence="1"/>
<dbReference type="EMBL" id="AF211846">
    <property type="protein sequence ID" value="AAF25379.1"/>
    <property type="molecule type" value="Genomic_DNA"/>
</dbReference>
<dbReference type="EMBL" id="CP000739">
    <property type="protein sequence ID" value="ABR62734.1"/>
    <property type="molecule type" value="Genomic_DNA"/>
</dbReference>
<dbReference type="RefSeq" id="WP_011969556.1">
    <property type="nucleotide sequence ID" value="NC_009620.1"/>
</dbReference>
<dbReference type="RefSeq" id="YP_001312667.1">
    <property type="nucleotide sequence ID" value="NC_009620.1"/>
</dbReference>
<dbReference type="SMR" id="P56889"/>
<dbReference type="KEGG" id="smd:Smed_3924"/>
<dbReference type="PATRIC" id="fig|366394.8.peg.370"/>
<dbReference type="HOGENOM" id="CLU_031450_2_0_5"/>
<dbReference type="OrthoDB" id="9764279at2"/>
<dbReference type="Proteomes" id="UP000001108">
    <property type="component" value="Plasmid pSMED01"/>
</dbReference>
<dbReference type="GO" id="GO:0000287">
    <property type="term" value="F:magnesium ion binding"/>
    <property type="evidence" value="ECO:0007669"/>
    <property type="project" value="UniProtKB-UniRule"/>
</dbReference>
<dbReference type="GO" id="GO:0004497">
    <property type="term" value="F:monooxygenase activity"/>
    <property type="evidence" value="ECO:0007669"/>
    <property type="project" value="UniProtKB-KW"/>
</dbReference>
<dbReference type="GO" id="GO:0016984">
    <property type="term" value="F:ribulose-bisphosphate carboxylase activity"/>
    <property type="evidence" value="ECO:0007669"/>
    <property type="project" value="UniProtKB-UniRule"/>
</dbReference>
<dbReference type="GO" id="GO:0019253">
    <property type="term" value="P:reductive pentose-phosphate cycle"/>
    <property type="evidence" value="ECO:0007669"/>
    <property type="project" value="UniProtKB-UniRule"/>
</dbReference>
<dbReference type="CDD" id="cd08212">
    <property type="entry name" value="RuBisCO_large_I"/>
    <property type="match status" value="1"/>
</dbReference>
<dbReference type="Gene3D" id="3.20.20.110">
    <property type="entry name" value="Ribulose bisphosphate carboxylase, large subunit, C-terminal domain"/>
    <property type="match status" value="1"/>
</dbReference>
<dbReference type="Gene3D" id="3.30.70.150">
    <property type="entry name" value="RuBisCO large subunit, N-terminal domain"/>
    <property type="match status" value="1"/>
</dbReference>
<dbReference type="HAMAP" id="MF_01338">
    <property type="entry name" value="RuBisCO_L_type1"/>
    <property type="match status" value="1"/>
</dbReference>
<dbReference type="InterPro" id="IPR033966">
    <property type="entry name" value="RuBisCO"/>
</dbReference>
<dbReference type="InterPro" id="IPR020878">
    <property type="entry name" value="RuBisCo_large_chain_AS"/>
</dbReference>
<dbReference type="InterPro" id="IPR000685">
    <property type="entry name" value="RuBisCO_lsu_C"/>
</dbReference>
<dbReference type="InterPro" id="IPR036376">
    <property type="entry name" value="RuBisCO_lsu_C_sf"/>
</dbReference>
<dbReference type="InterPro" id="IPR017443">
    <property type="entry name" value="RuBisCO_lsu_fd_N"/>
</dbReference>
<dbReference type="InterPro" id="IPR036422">
    <property type="entry name" value="RuBisCO_lsu_N_sf"/>
</dbReference>
<dbReference type="InterPro" id="IPR020888">
    <property type="entry name" value="RuBisCO_lsuI"/>
</dbReference>
<dbReference type="NCBIfam" id="NF003252">
    <property type="entry name" value="PRK04208.1"/>
    <property type="match status" value="1"/>
</dbReference>
<dbReference type="PANTHER" id="PTHR42704">
    <property type="entry name" value="RIBULOSE BISPHOSPHATE CARBOXYLASE"/>
    <property type="match status" value="1"/>
</dbReference>
<dbReference type="PANTHER" id="PTHR42704:SF17">
    <property type="entry name" value="RIBULOSE BISPHOSPHATE CARBOXYLASE LARGE CHAIN"/>
    <property type="match status" value="1"/>
</dbReference>
<dbReference type="Pfam" id="PF00016">
    <property type="entry name" value="RuBisCO_large"/>
    <property type="match status" value="1"/>
</dbReference>
<dbReference type="Pfam" id="PF02788">
    <property type="entry name" value="RuBisCO_large_N"/>
    <property type="match status" value="1"/>
</dbReference>
<dbReference type="SFLD" id="SFLDG01052">
    <property type="entry name" value="RuBisCO"/>
    <property type="match status" value="1"/>
</dbReference>
<dbReference type="SFLD" id="SFLDS00014">
    <property type="entry name" value="RuBisCO"/>
    <property type="match status" value="1"/>
</dbReference>
<dbReference type="SFLD" id="SFLDG00301">
    <property type="entry name" value="RuBisCO-like_proteins"/>
    <property type="match status" value="1"/>
</dbReference>
<dbReference type="SUPFAM" id="SSF51649">
    <property type="entry name" value="RuBisCo, C-terminal domain"/>
    <property type="match status" value="1"/>
</dbReference>
<dbReference type="SUPFAM" id="SSF54966">
    <property type="entry name" value="RuBisCO, large subunit, small (N-terminal) domain"/>
    <property type="match status" value="1"/>
</dbReference>
<dbReference type="PROSITE" id="PS00157">
    <property type="entry name" value="RUBISCO_LARGE"/>
    <property type="match status" value="1"/>
</dbReference>
<organism>
    <name type="scientific">Sinorhizobium medicae (strain WSM419)</name>
    <name type="common">Ensifer medicae</name>
    <dbReference type="NCBI Taxonomy" id="366394"/>
    <lineage>
        <taxon>Bacteria</taxon>
        <taxon>Pseudomonadati</taxon>
        <taxon>Pseudomonadota</taxon>
        <taxon>Alphaproteobacteria</taxon>
        <taxon>Hyphomicrobiales</taxon>
        <taxon>Rhizobiaceae</taxon>
        <taxon>Sinorhizobium/Ensifer group</taxon>
        <taxon>Sinorhizobium</taxon>
    </lineage>
</organism>
<gene>
    <name evidence="1" type="primary">cbbL</name>
    <name type="ordered locus">Smed_3924</name>
</gene>
<feature type="chain" id="PRO_0000062644" description="Ribulose bisphosphate carboxylase large chain">
    <location>
        <begin position="1"/>
        <end position="486"/>
    </location>
</feature>
<feature type="active site" description="Proton acceptor" evidence="1">
    <location>
        <position position="178"/>
    </location>
</feature>
<feature type="active site" description="Proton acceptor" evidence="1">
    <location>
        <position position="296"/>
    </location>
</feature>
<feature type="binding site" description="in homodimeric partner" evidence="1">
    <location>
        <position position="126"/>
    </location>
    <ligand>
        <name>substrate</name>
    </ligand>
</feature>
<feature type="binding site" evidence="1">
    <location>
        <position position="176"/>
    </location>
    <ligand>
        <name>substrate</name>
    </ligand>
</feature>
<feature type="binding site" evidence="1">
    <location>
        <position position="180"/>
    </location>
    <ligand>
        <name>substrate</name>
    </ligand>
</feature>
<feature type="binding site" description="via carbamate group" evidence="1">
    <location>
        <position position="204"/>
    </location>
    <ligand>
        <name>Mg(2+)</name>
        <dbReference type="ChEBI" id="CHEBI:18420"/>
    </ligand>
</feature>
<feature type="binding site" evidence="1">
    <location>
        <position position="206"/>
    </location>
    <ligand>
        <name>Mg(2+)</name>
        <dbReference type="ChEBI" id="CHEBI:18420"/>
    </ligand>
</feature>
<feature type="binding site" evidence="1">
    <location>
        <position position="207"/>
    </location>
    <ligand>
        <name>Mg(2+)</name>
        <dbReference type="ChEBI" id="CHEBI:18420"/>
    </ligand>
</feature>
<feature type="binding site" evidence="1">
    <location>
        <position position="297"/>
    </location>
    <ligand>
        <name>substrate</name>
    </ligand>
</feature>
<feature type="binding site" evidence="1">
    <location>
        <position position="329"/>
    </location>
    <ligand>
        <name>substrate</name>
    </ligand>
</feature>
<feature type="binding site" evidence="1">
    <location>
        <position position="381"/>
    </location>
    <ligand>
        <name>substrate</name>
    </ligand>
</feature>
<feature type="site" description="Transition state stabilizer" evidence="1">
    <location>
        <position position="336"/>
    </location>
</feature>
<feature type="modified residue" description="N6-carboxylysine" evidence="1">
    <location>
        <position position="204"/>
    </location>
</feature>
<feature type="sequence conflict" description="In Ref. 1; AAF25379." evidence="2" ref="1">
    <original>K</original>
    <variation>N</variation>
    <location>
        <position position="6"/>
    </location>
</feature>
<feature type="sequence conflict" description="In Ref. 1; AAF25379." evidence="2" ref="1">
    <original>K</original>
    <variation>N</variation>
    <location>
        <position position="35"/>
    </location>
</feature>
<feature type="sequence conflict" description="In Ref. 1; AAF25379." evidence="2" ref="1">
    <original>D</original>
    <variation>H</variation>
    <location>
        <position position="52"/>
    </location>
</feature>
<feature type="sequence conflict" description="In Ref. 1; AAF25379." evidence="2" ref="1">
    <original>A</original>
    <variation>P</variation>
    <location>
        <position position="56"/>
    </location>
</feature>
<feature type="sequence conflict" description="In Ref. 1; AAF25379." evidence="2" ref="1">
    <original>R</original>
    <variation>P</variation>
    <location>
        <position position="76"/>
    </location>
</feature>
<feature type="sequence conflict" description="In Ref. 1; AAF25379." evidence="2" ref="1">
    <original>F</original>
    <variation>L</variation>
    <location>
        <position position="128"/>
    </location>
</feature>
<keyword id="KW-0113">Calvin cycle</keyword>
<keyword id="KW-0120">Carbon dioxide fixation</keyword>
<keyword id="KW-0456">Lyase</keyword>
<keyword id="KW-0460">Magnesium</keyword>
<keyword id="KW-0479">Metal-binding</keyword>
<keyword id="KW-0503">Monooxygenase</keyword>
<keyword id="KW-0560">Oxidoreductase</keyword>
<keyword id="KW-0614">Plasmid</keyword>
<comment type="function">
    <text evidence="1">RuBisCO catalyzes two reactions: the carboxylation of D-ribulose 1,5-bisphosphate, the primary event in carbon dioxide fixation, as well as the oxidative fragmentation of the pentose substrate. Both reactions occur simultaneously and in competition at the same active site.</text>
</comment>
<comment type="catalytic activity">
    <reaction evidence="1">
        <text>2 (2R)-3-phosphoglycerate + 2 H(+) = D-ribulose 1,5-bisphosphate + CO2 + H2O</text>
        <dbReference type="Rhea" id="RHEA:23124"/>
        <dbReference type="ChEBI" id="CHEBI:15377"/>
        <dbReference type="ChEBI" id="CHEBI:15378"/>
        <dbReference type="ChEBI" id="CHEBI:16526"/>
        <dbReference type="ChEBI" id="CHEBI:57870"/>
        <dbReference type="ChEBI" id="CHEBI:58272"/>
        <dbReference type="EC" id="4.1.1.39"/>
    </reaction>
</comment>
<comment type="catalytic activity">
    <reaction evidence="1">
        <text>D-ribulose 1,5-bisphosphate + O2 = 2-phosphoglycolate + (2R)-3-phosphoglycerate + 2 H(+)</text>
        <dbReference type="Rhea" id="RHEA:36631"/>
        <dbReference type="ChEBI" id="CHEBI:15378"/>
        <dbReference type="ChEBI" id="CHEBI:15379"/>
        <dbReference type="ChEBI" id="CHEBI:57870"/>
        <dbReference type="ChEBI" id="CHEBI:58033"/>
        <dbReference type="ChEBI" id="CHEBI:58272"/>
    </reaction>
</comment>
<comment type="cofactor">
    <cofactor evidence="1">
        <name>Mg(2+)</name>
        <dbReference type="ChEBI" id="CHEBI:18420"/>
    </cofactor>
    <text evidence="1">Binds 1 Mg(2+) ion per subunit.</text>
</comment>
<comment type="subunit">
    <text evidence="1">Heterohexadecamer of 8 large chains and 8 small chains.</text>
</comment>
<comment type="miscellaneous">
    <text evidence="1">The basic functional RuBisCO is composed of a large chain homodimer in a 'head-to-tail' conformation. In form I RuBisCO this homodimer is arranged in a barrel-like tetramer with the small subunits forming a tetrameric 'cap' on each end of the 'barrel'.</text>
</comment>
<comment type="similarity">
    <text evidence="1">Belongs to the RuBisCO large chain family. Type I subfamily.</text>
</comment>
<protein>
    <recommendedName>
        <fullName evidence="1">Ribulose bisphosphate carboxylase large chain</fullName>
        <shortName evidence="1">RuBisCO large subunit</shortName>
        <ecNumber evidence="1">4.1.1.39</ecNumber>
    </recommendedName>
</protein>
<reference key="1">
    <citation type="submission" date="1999-12" db="EMBL/GenBank/DDBJ databases">
        <title>Genetic regulation of C1 metabolism in Sinorhizobium meliloti.</title>
        <authorList>
            <person name="Fenner B.J."/>
            <person name="Tiwari R.P."/>
            <person name="Dilworth M.J."/>
        </authorList>
    </citation>
    <scope>NUCLEOTIDE SEQUENCE [GENOMIC DNA]</scope>
</reference>
<reference key="2">
    <citation type="submission" date="2007-06" db="EMBL/GenBank/DDBJ databases">
        <title>Complete sequence of Sinorhizobium medicae WSM419 plasmid pSMED01.</title>
        <authorList>
            <consortium name="US DOE Joint Genome Institute"/>
            <person name="Copeland A."/>
            <person name="Lucas S."/>
            <person name="Lapidus A."/>
            <person name="Barry K."/>
            <person name="Glavina del Rio T."/>
            <person name="Dalin E."/>
            <person name="Tice H."/>
            <person name="Pitluck S."/>
            <person name="Chain P."/>
            <person name="Malfatti S."/>
            <person name="Shin M."/>
            <person name="Vergez L."/>
            <person name="Schmutz J."/>
            <person name="Larimer F."/>
            <person name="Land M."/>
            <person name="Hauser L."/>
            <person name="Kyrpides N."/>
            <person name="Mikhailova N."/>
            <person name="Reeve W.G."/>
            <person name="Richardson P."/>
        </authorList>
    </citation>
    <scope>NUCLEOTIDE SEQUENCE [LARGE SCALE GENOMIC DNA]</scope>
    <source>
        <strain>WSM419</strain>
    </source>
</reference>
<sequence>MNADAKTEIKGRERYKAGVLKYAQMGYWNGDYEPKDTDLIALFRITPQDGVDPIEAAAAVAGESSTATWTVVWTDRLTACDQYRAKAYRVDPVPGTPGQYFCYVAYDLILFEEGSIANLTASIIGNVFSFKPLKAARLEDMRLPVAYVKTFKGPPTGIVVERERLDKFGKPLLGATTKPKLGLSGKNYGRVVYEGLKGGLDFMKDDENINSQPFMHWRDRYLYCMEAVNHASAVTGEVKGHYLNVTAGTMEEMYRRAEFAKELGSVIVMVDLIIGWTAIQSMSEWCRQNDMILHMHRAGHGTYTRQKNHGISFRVIAKWLRLAGVDHLHAGTAVGKLEGDPLTVQGYYNVCREMKNAVDLPRGLFFEQDWADLKKVLPVASGGIHAGQMHQLLDLFGDDVVLQFGGGTIGHPMGIQAGATANRVALEAMVLARNEGRDIAHEGPEILRAAAKWCKPLEAALDTWGNISFNYTPTDTSDFVPSVTAA</sequence>
<evidence type="ECO:0000255" key="1">
    <source>
        <dbReference type="HAMAP-Rule" id="MF_01338"/>
    </source>
</evidence>
<evidence type="ECO:0000305" key="2"/>
<proteinExistence type="inferred from homology"/>
<accession>P56889</accession>
<accession>A6UGF4</accession>
<geneLocation type="plasmid">
    <name>pSMED01</name>
</geneLocation>
<name>RBL1_SINMW</name>